<reference key="1">
    <citation type="journal article" date="2005" name="Jpn. Agric. Res. Q.">
        <title>Genome sequence of Xanthomonas oryzae pv. oryzae suggests contribution of large numbers of effector genes and insertion sequences to its race diversity.</title>
        <authorList>
            <person name="Ochiai H."/>
            <person name="Inoue Y."/>
            <person name="Takeya M."/>
            <person name="Sasaki A."/>
            <person name="Kaku H."/>
        </authorList>
    </citation>
    <scope>NUCLEOTIDE SEQUENCE [LARGE SCALE GENOMIC DNA]</scope>
    <source>
        <strain>MAFF 311018</strain>
    </source>
</reference>
<protein>
    <recommendedName>
        <fullName>Transcriptional regulator MraZ</fullName>
    </recommendedName>
</protein>
<evidence type="ECO:0000255" key="1">
    <source>
        <dbReference type="HAMAP-Rule" id="MF_01008"/>
    </source>
</evidence>
<evidence type="ECO:0000255" key="2">
    <source>
        <dbReference type="PROSITE-ProRule" id="PRU01076"/>
    </source>
</evidence>
<proteinExistence type="inferred from homology"/>
<comment type="subunit">
    <text evidence="1">Forms oligomers.</text>
</comment>
<comment type="subcellular location">
    <subcellularLocation>
        <location evidence="1">Cytoplasm</location>
        <location evidence="1">Nucleoid</location>
    </subcellularLocation>
</comment>
<comment type="similarity">
    <text evidence="1">Belongs to the MraZ family.</text>
</comment>
<organism>
    <name type="scientific">Xanthomonas oryzae pv. oryzae (strain MAFF 311018)</name>
    <dbReference type="NCBI Taxonomy" id="342109"/>
    <lineage>
        <taxon>Bacteria</taxon>
        <taxon>Pseudomonadati</taxon>
        <taxon>Pseudomonadota</taxon>
        <taxon>Gammaproteobacteria</taxon>
        <taxon>Lysobacterales</taxon>
        <taxon>Lysobacteraceae</taxon>
        <taxon>Xanthomonas</taxon>
    </lineage>
</organism>
<sequence length="148" mass="16599">MFQGETAITVDDKGRMAVPTAYRDLVTRVSGNRLVLTYNPFEAGCLWLYAEKEWERVRDDVMSKPNTQRVIRTLQQKLVGSSAVLELDANGRLSIPASHRNAVGIEKKAVLLGMGDKFELWSEQAHRALIQQTLSDGDLGDELLDLRL</sequence>
<accession>Q2NZB0</accession>
<dbReference type="EMBL" id="AP008229">
    <property type="protein sequence ID" value="BAE70367.1"/>
    <property type="molecule type" value="Genomic_DNA"/>
</dbReference>
<dbReference type="SMR" id="Q2NZB0"/>
<dbReference type="KEGG" id="xom:XOO3612"/>
<dbReference type="HOGENOM" id="CLU_107907_2_0_6"/>
<dbReference type="GO" id="GO:0005737">
    <property type="term" value="C:cytoplasm"/>
    <property type="evidence" value="ECO:0007669"/>
    <property type="project" value="UniProtKB-UniRule"/>
</dbReference>
<dbReference type="GO" id="GO:0009295">
    <property type="term" value="C:nucleoid"/>
    <property type="evidence" value="ECO:0007669"/>
    <property type="project" value="UniProtKB-SubCell"/>
</dbReference>
<dbReference type="GO" id="GO:0003700">
    <property type="term" value="F:DNA-binding transcription factor activity"/>
    <property type="evidence" value="ECO:0007669"/>
    <property type="project" value="UniProtKB-UniRule"/>
</dbReference>
<dbReference type="GO" id="GO:0000976">
    <property type="term" value="F:transcription cis-regulatory region binding"/>
    <property type="evidence" value="ECO:0007669"/>
    <property type="project" value="TreeGrafter"/>
</dbReference>
<dbReference type="GO" id="GO:2000143">
    <property type="term" value="P:negative regulation of DNA-templated transcription initiation"/>
    <property type="evidence" value="ECO:0007669"/>
    <property type="project" value="TreeGrafter"/>
</dbReference>
<dbReference type="CDD" id="cd16321">
    <property type="entry name" value="MraZ_C"/>
    <property type="match status" value="1"/>
</dbReference>
<dbReference type="CDD" id="cd16320">
    <property type="entry name" value="MraZ_N"/>
    <property type="match status" value="1"/>
</dbReference>
<dbReference type="FunFam" id="3.40.1550.20:FF:000003">
    <property type="entry name" value="Transcriptional regulator MraZ"/>
    <property type="match status" value="1"/>
</dbReference>
<dbReference type="Gene3D" id="3.40.1550.20">
    <property type="entry name" value="Transcriptional regulator MraZ domain"/>
    <property type="match status" value="1"/>
</dbReference>
<dbReference type="HAMAP" id="MF_01008">
    <property type="entry name" value="MraZ"/>
    <property type="match status" value="1"/>
</dbReference>
<dbReference type="InterPro" id="IPR003444">
    <property type="entry name" value="MraZ"/>
</dbReference>
<dbReference type="InterPro" id="IPR035644">
    <property type="entry name" value="MraZ_C"/>
</dbReference>
<dbReference type="InterPro" id="IPR020603">
    <property type="entry name" value="MraZ_dom"/>
</dbReference>
<dbReference type="InterPro" id="IPR035642">
    <property type="entry name" value="MraZ_N"/>
</dbReference>
<dbReference type="InterPro" id="IPR038619">
    <property type="entry name" value="MraZ_sf"/>
</dbReference>
<dbReference type="InterPro" id="IPR007159">
    <property type="entry name" value="SpoVT-AbrB_dom"/>
</dbReference>
<dbReference type="InterPro" id="IPR037914">
    <property type="entry name" value="SpoVT-AbrB_sf"/>
</dbReference>
<dbReference type="NCBIfam" id="TIGR00242">
    <property type="entry name" value="division/cell wall cluster transcriptional repressor MraZ"/>
    <property type="match status" value="1"/>
</dbReference>
<dbReference type="PANTHER" id="PTHR34701">
    <property type="entry name" value="TRANSCRIPTIONAL REGULATOR MRAZ"/>
    <property type="match status" value="1"/>
</dbReference>
<dbReference type="PANTHER" id="PTHR34701:SF1">
    <property type="entry name" value="TRANSCRIPTIONAL REGULATOR MRAZ"/>
    <property type="match status" value="1"/>
</dbReference>
<dbReference type="Pfam" id="PF02381">
    <property type="entry name" value="MraZ"/>
    <property type="match status" value="2"/>
</dbReference>
<dbReference type="SUPFAM" id="SSF89447">
    <property type="entry name" value="AbrB/MazE/MraZ-like"/>
    <property type="match status" value="1"/>
</dbReference>
<dbReference type="PROSITE" id="PS51740">
    <property type="entry name" value="SPOVT_ABRB"/>
    <property type="match status" value="2"/>
</dbReference>
<gene>
    <name evidence="1" type="primary">mraZ</name>
    <name type="ordered locus">XOO3612</name>
</gene>
<keyword id="KW-0963">Cytoplasm</keyword>
<keyword id="KW-0238">DNA-binding</keyword>
<keyword id="KW-0677">Repeat</keyword>
<keyword id="KW-0804">Transcription</keyword>
<keyword id="KW-0805">Transcription regulation</keyword>
<feature type="chain" id="PRO_0000230119" description="Transcriptional regulator MraZ">
    <location>
        <begin position="1"/>
        <end position="148"/>
    </location>
</feature>
<feature type="domain" description="SpoVT-AbrB 1" evidence="2">
    <location>
        <begin position="5"/>
        <end position="53"/>
    </location>
</feature>
<feature type="domain" description="SpoVT-AbrB 2" evidence="2">
    <location>
        <begin position="82"/>
        <end position="125"/>
    </location>
</feature>
<name>MRAZ_XANOM</name>